<keyword id="KW-0067">ATP-binding</keyword>
<keyword id="KW-1003">Cell membrane</keyword>
<keyword id="KW-0406">Ion transport</keyword>
<keyword id="KW-0460">Magnesium</keyword>
<keyword id="KW-0472">Membrane</keyword>
<keyword id="KW-0479">Metal-binding</keyword>
<keyword id="KW-0547">Nucleotide-binding</keyword>
<keyword id="KW-0597">Phosphoprotein</keyword>
<keyword id="KW-0630">Potassium</keyword>
<keyword id="KW-0633">Potassium transport</keyword>
<keyword id="KW-0915">Sodium</keyword>
<keyword id="KW-0739">Sodium transport</keyword>
<keyword id="KW-0740">Sodium/potassium transport</keyword>
<keyword id="KW-1278">Translocase</keyword>
<keyword id="KW-0812">Transmembrane</keyword>
<keyword id="KW-1133">Transmembrane helix</keyword>
<keyword id="KW-0813">Transport</keyword>
<sequence length="1010" mass="111507">MGDKDDRFPKKKKGGTKDMDALKKEVPITEHKMSVEEVCRKFQTDVVQGLTNAKAAEFLLRDGPNALTPPPTTPEWVKFCRQLFGGFSILLWTGAILCFLAYAIQAATEDEPAGDNLYLGIVLTAVVVITGCFSYFQEAKSSKIMESFKNMVPQQALVIREGEKVQVNAEEVMAGDLIEVKGGDRIPADIRVTSAHGCKVDNSSLTGESEPQSRSPDCTHDNPLETRNIAFFSTNCVEGTARGIVICTGDRTVMGRIATLTSGLETGKTPIAVEIEHFIHIITGVAVFLGVTFFILAIILGYTWLKAVIFLIGIIVANVPEGLLATVTVCLTLTAKRMAKKNCLVKNLEAVETLGSTSTICSDKTGTLTQNRMTVAHMWFDNQIHEADTTEDQSGAAFDKSSVTWLSLSRVAPLCNRAQFKPRQDSVSILKRDVAGDASESALLKCIELSCGSVRMMRDKNKKVAEIPFNPTNKYQLSIHETEDPNDNRYLLVMKGALERILDRCSTIMLQGKEQPMDEEMKEAFQNAYMELGGLGERVLGFRHLLLPEDQYPKGFAFDTDDVNFQTDNLCFVGLMSMIDPPRAAVPDAVGKCRSAGIKVIMVTGDHPITAKAIAKGVGIISEGNETVEDIAARLNIPVSQVNPRDAKACVIHGSDLKDLSQDQMDDILRNHTEIVFARTSPQQKLIIVEGCQRLGAIVAVTGDGVNDSPALKKADIGVAMGISGSDVSKQAADMILLDDNFASIVTGVEEGRLIFDNLKKSIAYTLTSNIPEITPFLFFIIVNIPLALGTITILCIDLGTDMGSAISLAYETAESDIMKRQPRNPCRDKLVNERLISIAYGQIGMIQALGGFFSYFVILAENGFLPSQLVGIRLNWDDRSLNDLEDSYGQQWTYEQRKIVEFTCHTAFFVSIVVVQWADLIICKTRRNSVFQQGMKNKILIFGLFEETALAAFLSYCPGMDVALRMYPLKPTWWFWAFPYSFLIFVYDEARKLILCRNPGGWVEKETYY</sequence>
<gene>
    <name type="primary">atp1a3</name>
</gene>
<reference key="1">
    <citation type="submission" date="1998-11" db="EMBL/GenBank/DDBJ databases">
        <authorList>
            <person name="Feng H.H."/>
            <person name="Leu J.H."/>
            <person name="Huang C.J."/>
            <person name="Hwang P.P."/>
        </authorList>
    </citation>
    <scope>NUCLEOTIDE SEQUENCE [MRNA]</scope>
</reference>
<dbReference type="EC" id="7.2.2.13"/>
<dbReference type="EMBL" id="AF109409">
    <property type="protein sequence ID" value="AAF75108.1"/>
    <property type="molecule type" value="mRNA"/>
</dbReference>
<dbReference type="SMR" id="P58312"/>
<dbReference type="GO" id="GO:0005783">
    <property type="term" value="C:endoplasmic reticulum"/>
    <property type="evidence" value="ECO:0000250"/>
    <property type="project" value="UniProtKB"/>
</dbReference>
<dbReference type="GO" id="GO:0005794">
    <property type="term" value="C:Golgi apparatus"/>
    <property type="evidence" value="ECO:0000250"/>
    <property type="project" value="UniProtKB"/>
</dbReference>
<dbReference type="GO" id="GO:0005886">
    <property type="term" value="C:plasma membrane"/>
    <property type="evidence" value="ECO:0000250"/>
    <property type="project" value="UniProtKB"/>
</dbReference>
<dbReference type="GO" id="GO:0045202">
    <property type="term" value="C:synapse"/>
    <property type="evidence" value="ECO:0000250"/>
    <property type="project" value="UniProtKB"/>
</dbReference>
<dbReference type="GO" id="GO:0005524">
    <property type="term" value="F:ATP binding"/>
    <property type="evidence" value="ECO:0007669"/>
    <property type="project" value="UniProtKB-KW"/>
</dbReference>
<dbReference type="GO" id="GO:0016887">
    <property type="term" value="F:ATP hydrolysis activity"/>
    <property type="evidence" value="ECO:0007669"/>
    <property type="project" value="InterPro"/>
</dbReference>
<dbReference type="GO" id="GO:0046872">
    <property type="term" value="F:metal ion binding"/>
    <property type="evidence" value="ECO:0007669"/>
    <property type="project" value="UniProtKB-KW"/>
</dbReference>
<dbReference type="GO" id="GO:0005391">
    <property type="term" value="F:P-type sodium:potassium-exchanging transporter activity"/>
    <property type="evidence" value="ECO:0000250"/>
    <property type="project" value="UniProtKB"/>
</dbReference>
<dbReference type="GO" id="GO:0030007">
    <property type="term" value="P:intracellular potassium ion homeostasis"/>
    <property type="evidence" value="ECO:0007669"/>
    <property type="project" value="TreeGrafter"/>
</dbReference>
<dbReference type="GO" id="GO:0006883">
    <property type="term" value="P:intracellular sodium ion homeostasis"/>
    <property type="evidence" value="ECO:0007669"/>
    <property type="project" value="TreeGrafter"/>
</dbReference>
<dbReference type="GO" id="GO:1990573">
    <property type="term" value="P:potassium ion import across plasma membrane"/>
    <property type="evidence" value="ECO:0007669"/>
    <property type="project" value="TreeGrafter"/>
</dbReference>
<dbReference type="GO" id="GO:1902600">
    <property type="term" value="P:proton transmembrane transport"/>
    <property type="evidence" value="ECO:0007669"/>
    <property type="project" value="TreeGrafter"/>
</dbReference>
<dbReference type="GO" id="GO:0036376">
    <property type="term" value="P:sodium ion export across plasma membrane"/>
    <property type="evidence" value="ECO:0007669"/>
    <property type="project" value="TreeGrafter"/>
</dbReference>
<dbReference type="CDD" id="cd02608">
    <property type="entry name" value="P-type_ATPase_Na-K_like"/>
    <property type="match status" value="1"/>
</dbReference>
<dbReference type="FunFam" id="2.70.150.10:FF:000106">
    <property type="entry name" value="Sodium/potassium-transporting ATPase subunit alpha"/>
    <property type="match status" value="1"/>
</dbReference>
<dbReference type="FunFam" id="3.40.1110.10:FF:000001">
    <property type="entry name" value="Sodium/potassium-transporting ATPase subunit alpha"/>
    <property type="match status" value="1"/>
</dbReference>
<dbReference type="FunFam" id="3.40.50.1000:FF:000004">
    <property type="entry name" value="Sodium/potassium-transporting ATPase subunit alpha"/>
    <property type="match status" value="1"/>
</dbReference>
<dbReference type="FunFam" id="1.20.1110.10:FF:000095">
    <property type="entry name" value="Sodium/potassium-transporting ATPase subunit alpha-1"/>
    <property type="match status" value="2"/>
</dbReference>
<dbReference type="Gene3D" id="3.40.1110.10">
    <property type="entry name" value="Calcium-transporting ATPase, cytoplasmic domain N"/>
    <property type="match status" value="1"/>
</dbReference>
<dbReference type="Gene3D" id="2.70.150.10">
    <property type="entry name" value="Calcium-transporting ATPase, cytoplasmic transduction domain A"/>
    <property type="match status" value="1"/>
</dbReference>
<dbReference type="Gene3D" id="1.20.1110.10">
    <property type="entry name" value="Calcium-transporting ATPase, transmembrane domain"/>
    <property type="match status" value="1"/>
</dbReference>
<dbReference type="Gene3D" id="3.40.50.1000">
    <property type="entry name" value="HAD superfamily/HAD-like"/>
    <property type="match status" value="1"/>
</dbReference>
<dbReference type="InterPro" id="IPR006068">
    <property type="entry name" value="ATPase_P-typ_cation-transptr_C"/>
</dbReference>
<dbReference type="InterPro" id="IPR004014">
    <property type="entry name" value="ATPase_P-typ_cation-transptr_N"/>
</dbReference>
<dbReference type="InterPro" id="IPR023299">
    <property type="entry name" value="ATPase_P-typ_cyto_dom_N"/>
</dbReference>
<dbReference type="InterPro" id="IPR018303">
    <property type="entry name" value="ATPase_P-typ_P_site"/>
</dbReference>
<dbReference type="InterPro" id="IPR023298">
    <property type="entry name" value="ATPase_P-typ_TM_dom_sf"/>
</dbReference>
<dbReference type="InterPro" id="IPR008250">
    <property type="entry name" value="ATPase_P-typ_transduc_dom_A_sf"/>
</dbReference>
<dbReference type="InterPro" id="IPR050510">
    <property type="entry name" value="Cation_transp_ATPase_P-type"/>
</dbReference>
<dbReference type="InterPro" id="IPR036412">
    <property type="entry name" value="HAD-like_sf"/>
</dbReference>
<dbReference type="InterPro" id="IPR023214">
    <property type="entry name" value="HAD_sf"/>
</dbReference>
<dbReference type="InterPro" id="IPR005775">
    <property type="entry name" value="P-type_ATPase_IIC"/>
</dbReference>
<dbReference type="InterPro" id="IPR001757">
    <property type="entry name" value="P_typ_ATPase"/>
</dbReference>
<dbReference type="InterPro" id="IPR044492">
    <property type="entry name" value="P_typ_ATPase_HD_dom"/>
</dbReference>
<dbReference type="NCBIfam" id="TIGR01106">
    <property type="entry name" value="ATPase-IIC_X-K"/>
    <property type="match status" value="1"/>
</dbReference>
<dbReference type="NCBIfam" id="TIGR01494">
    <property type="entry name" value="ATPase_P-type"/>
    <property type="match status" value="2"/>
</dbReference>
<dbReference type="PANTHER" id="PTHR43294">
    <property type="entry name" value="SODIUM/POTASSIUM-TRANSPORTING ATPASE SUBUNIT ALPHA"/>
    <property type="match status" value="1"/>
</dbReference>
<dbReference type="PANTHER" id="PTHR43294:SF24">
    <property type="entry name" value="SODIUM_POTASSIUM-TRANSPORTING ATPASE SUBUNIT ALPHA"/>
    <property type="match status" value="1"/>
</dbReference>
<dbReference type="Pfam" id="PF13246">
    <property type="entry name" value="Cation_ATPase"/>
    <property type="match status" value="1"/>
</dbReference>
<dbReference type="Pfam" id="PF00689">
    <property type="entry name" value="Cation_ATPase_C"/>
    <property type="match status" value="1"/>
</dbReference>
<dbReference type="Pfam" id="PF00690">
    <property type="entry name" value="Cation_ATPase_N"/>
    <property type="match status" value="1"/>
</dbReference>
<dbReference type="Pfam" id="PF00122">
    <property type="entry name" value="E1-E2_ATPase"/>
    <property type="match status" value="1"/>
</dbReference>
<dbReference type="Pfam" id="PF00702">
    <property type="entry name" value="Hydrolase"/>
    <property type="match status" value="1"/>
</dbReference>
<dbReference type="PRINTS" id="PR00119">
    <property type="entry name" value="CATATPASE"/>
</dbReference>
<dbReference type="PRINTS" id="PR00121">
    <property type="entry name" value="NAKATPASE"/>
</dbReference>
<dbReference type="SFLD" id="SFLDS00003">
    <property type="entry name" value="Haloacid_Dehalogenase"/>
    <property type="match status" value="1"/>
</dbReference>
<dbReference type="SFLD" id="SFLDF00027">
    <property type="entry name" value="p-type_atpase"/>
    <property type="match status" value="1"/>
</dbReference>
<dbReference type="SMART" id="SM00831">
    <property type="entry name" value="Cation_ATPase_N"/>
    <property type="match status" value="1"/>
</dbReference>
<dbReference type="SUPFAM" id="SSF81653">
    <property type="entry name" value="Calcium ATPase, transduction domain A"/>
    <property type="match status" value="1"/>
</dbReference>
<dbReference type="SUPFAM" id="SSF81665">
    <property type="entry name" value="Calcium ATPase, transmembrane domain M"/>
    <property type="match status" value="1"/>
</dbReference>
<dbReference type="SUPFAM" id="SSF56784">
    <property type="entry name" value="HAD-like"/>
    <property type="match status" value="1"/>
</dbReference>
<dbReference type="SUPFAM" id="SSF81660">
    <property type="entry name" value="Metal cation-transporting ATPase, ATP-binding domain N"/>
    <property type="match status" value="1"/>
</dbReference>
<dbReference type="PROSITE" id="PS00154">
    <property type="entry name" value="ATPASE_E1_E2"/>
    <property type="match status" value="1"/>
</dbReference>
<name>AT1A3_OREMO</name>
<proteinExistence type="evidence at transcript level"/>
<protein>
    <recommendedName>
        <fullName>Sodium/potassium-transporting ATPase subunit alpha-3</fullName>
        <shortName>Na(+)/K(+) ATPase alpha-3 subunit</shortName>
        <ecNumber>7.2.2.13</ecNumber>
    </recommendedName>
    <alternativeName>
        <fullName>Na(+)/K(+) ATPase alpha(III) subunit</fullName>
    </alternativeName>
    <alternativeName>
        <fullName>Sodium pump subunit alpha-3</fullName>
    </alternativeName>
</protein>
<evidence type="ECO:0000250" key="1"/>
<evidence type="ECO:0000255" key="2"/>
<evidence type="ECO:0000256" key="3">
    <source>
        <dbReference type="SAM" id="MobiDB-lite"/>
    </source>
</evidence>
<evidence type="ECO:0000305" key="4"/>
<comment type="function">
    <text>This is the catalytic component of the active enzyme, which catalyzes the hydrolysis of ATP coupled with the exchange of sodium and potassium ions across the plasma membrane. This action creates the electrochemical gradient of sodium and potassium ions, providing the energy for active transport of various nutrients.</text>
</comment>
<comment type="catalytic activity">
    <reaction>
        <text>K(+)(out) + Na(+)(in) + ATP + H2O = K(+)(in) + Na(+)(out) + ADP + phosphate + H(+)</text>
        <dbReference type="Rhea" id="RHEA:18353"/>
        <dbReference type="ChEBI" id="CHEBI:15377"/>
        <dbReference type="ChEBI" id="CHEBI:15378"/>
        <dbReference type="ChEBI" id="CHEBI:29101"/>
        <dbReference type="ChEBI" id="CHEBI:29103"/>
        <dbReference type="ChEBI" id="CHEBI:30616"/>
        <dbReference type="ChEBI" id="CHEBI:43474"/>
        <dbReference type="ChEBI" id="CHEBI:456216"/>
        <dbReference type="EC" id="7.2.2.13"/>
    </reaction>
</comment>
<comment type="subunit">
    <text evidence="4">The sodium/potassium-transporting ATPase is composed of a catalytic alpha subunit, an auxiliary non-catalytic beta subunit and an additional regulatory subunit.</text>
</comment>
<comment type="subcellular location">
    <subcellularLocation>
        <location evidence="1">Cell membrane</location>
        <topology evidence="1">Multi-pass membrane protein</topology>
    </subcellularLocation>
</comment>
<comment type="similarity">
    <text evidence="4">Belongs to the cation transport ATPase (P-type) (TC 3.A.3) family. Type IIC subfamily.</text>
</comment>
<organism>
    <name type="scientific">Oreochromis mossambicus</name>
    <name type="common">Mozambique tilapia</name>
    <name type="synonym">Tilapia mossambica</name>
    <dbReference type="NCBI Taxonomy" id="8127"/>
    <lineage>
        <taxon>Eukaryota</taxon>
        <taxon>Metazoa</taxon>
        <taxon>Chordata</taxon>
        <taxon>Craniata</taxon>
        <taxon>Vertebrata</taxon>
        <taxon>Euteleostomi</taxon>
        <taxon>Actinopterygii</taxon>
        <taxon>Neopterygii</taxon>
        <taxon>Teleostei</taxon>
        <taxon>Neoteleostei</taxon>
        <taxon>Acanthomorphata</taxon>
        <taxon>Ovalentaria</taxon>
        <taxon>Cichlomorphae</taxon>
        <taxon>Cichliformes</taxon>
        <taxon>Cichlidae</taxon>
        <taxon>African cichlids</taxon>
        <taxon>Pseudocrenilabrinae</taxon>
        <taxon>Oreochromini</taxon>
        <taxon>Oreochromis</taxon>
    </lineage>
</organism>
<feature type="chain" id="PRO_0000046302" description="Sodium/potassium-transporting ATPase subunit alpha-3">
    <location>
        <begin position="1"/>
        <end position="1010"/>
    </location>
</feature>
<feature type="topological domain" description="Cytoplasmic" evidence="2">
    <location>
        <begin position="1"/>
        <end position="74"/>
    </location>
</feature>
<feature type="transmembrane region" description="Helical" evidence="2">
    <location>
        <begin position="75"/>
        <end position="95"/>
    </location>
</feature>
<feature type="topological domain" description="Extracellular" evidence="2">
    <location>
        <begin position="96"/>
        <end position="118"/>
    </location>
</feature>
<feature type="transmembrane region" description="Helical" evidence="2">
    <location>
        <begin position="119"/>
        <end position="139"/>
    </location>
</feature>
<feature type="topological domain" description="Cytoplasmic" evidence="2">
    <location>
        <begin position="140"/>
        <end position="275"/>
    </location>
</feature>
<feature type="transmembrane region" description="Helical" evidence="2">
    <location>
        <begin position="276"/>
        <end position="295"/>
    </location>
</feature>
<feature type="topological domain" description="Extracellular" evidence="2">
    <location>
        <begin position="296"/>
        <end position="307"/>
    </location>
</feature>
<feature type="transmembrane region" description="Helical" evidence="2">
    <location>
        <begin position="308"/>
        <end position="325"/>
    </location>
</feature>
<feature type="topological domain" description="Cytoplasmic" evidence="2">
    <location>
        <begin position="326"/>
        <end position="759"/>
    </location>
</feature>
<feature type="transmembrane region" description="Helical" evidence="2">
    <location>
        <begin position="760"/>
        <end position="779"/>
    </location>
</feature>
<feature type="topological domain" description="Extracellular" evidence="2">
    <location>
        <begin position="780"/>
        <end position="789"/>
    </location>
</feature>
<feature type="transmembrane region" description="Helical" evidence="2">
    <location>
        <begin position="790"/>
        <end position="810"/>
    </location>
</feature>
<feature type="topological domain" description="Cytoplasmic" evidence="2">
    <location>
        <begin position="811"/>
        <end position="830"/>
    </location>
</feature>
<feature type="transmembrane region" description="Helical" evidence="2">
    <location>
        <begin position="831"/>
        <end position="853"/>
    </location>
</feature>
<feature type="topological domain" description="Extracellular" evidence="2">
    <location>
        <begin position="854"/>
        <end position="905"/>
    </location>
</feature>
<feature type="transmembrane region" description="Helical" evidence="2">
    <location>
        <begin position="906"/>
        <end position="925"/>
    </location>
</feature>
<feature type="topological domain" description="Cytoplasmic" evidence="2">
    <location>
        <begin position="926"/>
        <end position="938"/>
    </location>
</feature>
<feature type="transmembrane region" description="Helical" evidence="2">
    <location>
        <begin position="939"/>
        <end position="957"/>
    </location>
</feature>
<feature type="topological domain" description="Extracellular" evidence="2">
    <location>
        <begin position="958"/>
        <end position="972"/>
    </location>
</feature>
<feature type="transmembrane region" description="Helical" evidence="2">
    <location>
        <begin position="973"/>
        <end position="993"/>
    </location>
</feature>
<feature type="topological domain" description="Cytoplasmic" evidence="2">
    <location>
        <begin position="994"/>
        <end position="1010"/>
    </location>
</feature>
<feature type="region of interest" description="Disordered" evidence="3">
    <location>
        <begin position="1"/>
        <end position="21"/>
    </location>
</feature>
<feature type="region of interest" description="Interaction with phosphoinositide-3 kinase" evidence="1">
    <location>
        <begin position="69"/>
        <end position="71"/>
    </location>
</feature>
<feature type="region of interest" description="Disordered" evidence="3">
    <location>
        <begin position="201"/>
        <end position="221"/>
    </location>
</feature>
<feature type="compositionally biased region" description="Polar residues" evidence="3">
    <location>
        <begin position="201"/>
        <end position="216"/>
    </location>
</feature>
<feature type="active site" description="4-aspartylphosphate intermediate" evidence="1">
    <location>
        <position position="363"/>
    </location>
</feature>
<feature type="binding site" evidence="1">
    <location>
        <position position="704"/>
    </location>
    <ligand>
        <name>Mg(2+)</name>
        <dbReference type="ChEBI" id="CHEBI:18420"/>
    </ligand>
</feature>
<feature type="binding site" evidence="1">
    <location>
        <position position="708"/>
    </location>
    <ligand>
        <name>Mg(2+)</name>
        <dbReference type="ChEBI" id="CHEBI:18420"/>
    </ligand>
</feature>
<feature type="modified residue" description="Phosphoserine; by PKA" evidence="1">
    <location>
        <position position="930"/>
    </location>
</feature>
<accession>P58312</accession>